<evidence type="ECO:0000255" key="1">
    <source>
        <dbReference type="HAMAP-Rule" id="MF_00503"/>
    </source>
</evidence>
<evidence type="ECO:0000305" key="2"/>
<dbReference type="EMBL" id="CP000563">
    <property type="protein sequence ID" value="ABN63115.1"/>
    <property type="molecule type" value="Genomic_DNA"/>
</dbReference>
<dbReference type="RefSeq" id="WP_006083041.1">
    <property type="nucleotide sequence ID" value="NC_009052.1"/>
</dbReference>
<dbReference type="SMR" id="A3D8Q2"/>
<dbReference type="STRING" id="325240.Sbal_3640"/>
<dbReference type="KEGG" id="sbl:Sbal_3640"/>
<dbReference type="HOGENOM" id="CLU_078938_4_1_6"/>
<dbReference type="OrthoDB" id="9788336at2"/>
<dbReference type="Proteomes" id="UP000001557">
    <property type="component" value="Chromosome"/>
</dbReference>
<dbReference type="GO" id="GO:1990904">
    <property type="term" value="C:ribonucleoprotein complex"/>
    <property type="evidence" value="ECO:0007669"/>
    <property type="project" value="UniProtKB-KW"/>
</dbReference>
<dbReference type="GO" id="GO:0005840">
    <property type="term" value="C:ribosome"/>
    <property type="evidence" value="ECO:0007669"/>
    <property type="project" value="UniProtKB-KW"/>
</dbReference>
<dbReference type="GO" id="GO:0019843">
    <property type="term" value="F:rRNA binding"/>
    <property type="evidence" value="ECO:0007669"/>
    <property type="project" value="UniProtKB-UniRule"/>
</dbReference>
<dbReference type="GO" id="GO:0003735">
    <property type="term" value="F:structural constituent of ribosome"/>
    <property type="evidence" value="ECO:0007669"/>
    <property type="project" value="InterPro"/>
</dbReference>
<dbReference type="GO" id="GO:0006412">
    <property type="term" value="P:translation"/>
    <property type="evidence" value="ECO:0007669"/>
    <property type="project" value="UniProtKB-UniRule"/>
</dbReference>
<dbReference type="FunFam" id="3.10.430.100:FF:000001">
    <property type="entry name" value="50S ribosomal protein L9"/>
    <property type="match status" value="1"/>
</dbReference>
<dbReference type="FunFam" id="3.40.5.10:FF:000001">
    <property type="entry name" value="50S ribosomal protein L9"/>
    <property type="match status" value="1"/>
</dbReference>
<dbReference type="Gene3D" id="3.10.430.100">
    <property type="entry name" value="Ribosomal protein L9, C-terminal domain"/>
    <property type="match status" value="1"/>
</dbReference>
<dbReference type="Gene3D" id="3.40.5.10">
    <property type="entry name" value="Ribosomal protein L9, N-terminal domain"/>
    <property type="match status" value="1"/>
</dbReference>
<dbReference type="HAMAP" id="MF_00503">
    <property type="entry name" value="Ribosomal_bL9"/>
    <property type="match status" value="1"/>
</dbReference>
<dbReference type="InterPro" id="IPR000244">
    <property type="entry name" value="Ribosomal_bL9"/>
</dbReference>
<dbReference type="InterPro" id="IPR009027">
    <property type="entry name" value="Ribosomal_bL9/RNase_H1_N"/>
</dbReference>
<dbReference type="InterPro" id="IPR020594">
    <property type="entry name" value="Ribosomal_bL9_bac/chp"/>
</dbReference>
<dbReference type="InterPro" id="IPR020069">
    <property type="entry name" value="Ribosomal_bL9_C"/>
</dbReference>
<dbReference type="InterPro" id="IPR036791">
    <property type="entry name" value="Ribosomal_bL9_C_sf"/>
</dbReference>
<dbReference type="InterPro" id="IPR020070">
    <property type="entry name" value="Ribosomal_bL9_N"/>
</dbReference>
<dbReference type="InterPro" id="IPR036935">
    <property type="entry name" value="Ribosomal_bL9_N_sf"/>
</dbReference>
<dbReference type="NCBIfam" id="TIGR00158">
    <property type="entry name" value="L9"/>
    <property type="match status" value="1"/>
</dbReference>
<dbReference type="PANTHER" id="PTHR21368">
    <property type="entry name" value="50S RIBOSOMAL PROTEIN L9"/>
    <property type="match status" value="1"/>
</dbReference>
<dbReference type="Pfam" id="PF03948">
    <property type="entry name" value="Ribosomal_L9_C"/>
    <property type="match status" value="1"/>
</dbReference>
<dbReference type="Pfam" id="PF01281">
    <property type="entry name" value="Ribosomal_L9_N"/>
    <property type="match status" value="1"/>
</dbReference>
<dbReference type="SUPFAM" id="SSF55658">
    <property type="entry name" value="L9 N-domain-like"/>
    <property type="match status" value="1"/>
</dbReference>
<dbReference type="SUPFAM" id="SSF55653">
    <property type="entry name" value="Ribosomal protein L9 C-domain"/>
    <property type="match status" value="1"/>
</dbReference>
<dbReference type="PROSITE" id="PS00651">
    <property type="entry name" value="RIBOSOMAL_L9"/>
    <property type="match status" value="1"/>
</dbReference>
<sequence>MNVILLDKIANLGNLGDQVSVKAGYARNFLLPQGKAVVANESNVKVFEARRAELEAKLAAELAAANLRAEKITALEAVVIASKAGDEGKLFGSVGNRDIADAVTAAGVELAKAEVRLPLGALRTTGDFEVEVQLHTEVKAVVKVSVVAEA</sequence>
<name>RL9_SHEB5</name>
<accession>A3D8Q2</accession>
<organism>
    <name type="scientific">Shewanella baltica (strain OS155 / ATCC BAA-1091)</name>
    <dbReference type="NCBI Taxonomy" id="325240"/>
    <lineage>
        <taxon>Bacteria</taxon>
        <taxon>Pseudomonadati</taxon>
        <taxon>Pseudomonadota</taxon>
        <taxon>Gammaproteobacteria</taxon>
        <taxon>Alteromonadales</taxon>
        <taxon>Shewanellaceae</taxon>
        <taxon>Shewanella</taxon>
    </lineage>
</organism>
<protein>
    <recommendedName>
        <fullName evidence="1">Large ribosomal subunit protein bL9</fullName>
    </recommendedName>
    <alternativeName>
        <fullName evidence="2">50S ribosomal protein L9</fullName>
    </alternativeName>
</protein>
<comment type="function">
    <text evidence="1">Binds to the 23S rRNA.</text>
</comment>
<comment type="similarity">
    <text evidence="1">Belongs to the bacterial ribosomal protein bL9 family.</text>
</comment>
<keyword id="KW-1185">Reference proteome</keyword>
<keyword id="KW-0687">Ribonucleoprotein</keyword>
<keyword id="KW-0689">Ribosomal protein</keyword>
<keyword id="KW-0694">RNA-binding</keyword>
<keyword id="KW-0699">rRNA-binding</keyword>
<reference key="1">
    <citation type="submission" date="2007-02" db="EMBL/GenBank/DDBJ databases">
        <title>Complete sequence of chromosome of Shewanella baltica OS155.</title>
        <authorList>
            <consortium name="US DOE Joint Genome Institute"/>
            <person name="Copeland A."/>
            <person name="Lucas S."/>
            <person name="Lapidus A."/>
            <person name="Barry K."/>
            <person name="Detter J.C."/>
            <person name="Glavina del Rio T."/>
            <person name="Hammon N."/>
            <person name="Israni S."/>
            <person name="Dalin E."/>
            <person name="Tice H."/>
            <person name="Pitluck S."/>
            <person name="Sims D.R."/>
            <person name="Brettin T."/>
            <person name="Bruce D."/>
            <person name="Han C."/>
            <person name="Tapia R."/>
            <person name="Brainard J."/>
            <person name="Schmutz J."/>
            <person name="Larimer F."/>
            <person name="Land M."/>
            <person name="Hauser L."/>
            <person name="Kyrpides N."/>
            <person name="Mikhailova N."/>
            <person name="Brettar I."/>
            <person name="Klappenbach J."/>
            <person name="Konstantinidis K."/>
            <person name="Rodrigues J."/>
            <person name="Tiedje J."/>
            <person name="Richardson P."/>
        </authorList>
    </citation>
    <scope>NUCLEOTIDE SEQUENCE [LARGE SCALE GENOMIC DNA]</scope>
    <source>
        <strain>OS155 / ATCC BAA-1091</strain>
    </source>
</reference>
<gene>
    <name evidence="1" type="primary">rplI</name>
    <name type="ordered locus">Sbal_3640</name>
</gene>
<proteinExistence type="inferred from homology"/>
<feature type="chain" id="PRO_1000014855" description="Large ribosomal subunit protein bL9">
    <location>
        <begin position="1"/>
        <end position="150"/>
    </location>
</feature>